<sequence>MFCRSPFLGISSWSLASAALCPSSCSFPAGRDLRCDAAVPEVKWTAFVRTLVARPLSADDVRDFVSTFAHCRLALSWPVGAELRFATSDMLGITQAELAKLSRGYGCCPGMDLTVIGVTIFAEVSALVLVGECGEIYAFNGVFDDALYRLAEDAFGLWKHGLRRFEPVYGSKCLMETGASFFGGMSGVDDALAFAVSFDKALVPLPWPRGAFFEFAVPRRAEKRWRLIPGGGVAVVIGRFFGRGVTLPLLRRQRVLMDQVGRVYAASLDGGAVVRLSDSFRAFLAMGVRKLFKNHRFPPGHLWTMQLPVTCVHAPVINLPAVYQLSPHMVEREMSAVSCGASTVVRRDCEDTLRDGDAGVDTS</sequence>
<evidence type="ECO:0000255" key="1"/>
<organismHost>
    <name type="scientific">Homo sapiens</name>
    <name type="common">Human</name>
    <dbReference type="NCBI Taxonomy" id="9606"/>
</organismHost>
<organism>
    <name type="scientific">Human herpesvirus 6B (strain Z29)</name>
    <name type="common">HHV-6 variant B</name>
    <name type="synonym">Human B lymphotropic virus</name>
    <dbReference type="NCBI Taxonomy" id="36351"/>
    <lineage>
        <taxon>Viruses</taxon>
        <taxon>Duplodnaviria</taxon>
        <taxon>Heunggongvirae</taxon>
        <taxon>Peploviricota</taxon>
        <taxon>Herviviricetes</taxon>
        <taxon>Herpesvirales</taxon>
        <taxon>Orthoherpesviridae</taxon>
        <taxon>Betaherpesvirinae</taxon>
        <taxon>Roseolovirus</taxon>
        <taxon>Roseolovirus humanbeta6b</taxon>
        <taxon>Human herpesvirus 6B</taxon>
    </lineage>
</organism>
<feature type="signal peptide" evidence="1">
    <location>
        <begin position="1"/>
        <end position="18"/>
    </location>
</feature>
<feature type="chain" id="PRO_0000408450" description="Protein U2">
    <location>
        <begin position="19"/>
        <end position="363"/>
    </location>
</feature>
<name>VU2_HHV6Z</name>
<dbReference type="EMBL" id="AF157706">
    <property type="protein sequence ID" value="AAD49691.1"/>
    <property type="molecule type" value="Genomic_DNA"/>
</dbReference>
<dbReference type="RefSeq" id="NP_050184.1">
    <property type="nucleotide sequence ID" value="NC_000898.1"/>
</dbReference>
<dbReference type="SMR" id="Q9QJ57"/>
<dbReference type="DNASU" id="1497102"/>
<dbReference type="GeneID" id="1497102"/>
<dbReference type="KEGG" id="vg:1497102"/>
<dbReference type="Proteomes" id="UP000006930">
    <property type="component" value="Segment"/>
</dbReference>
<dbReference type="InterPro" id="IPR003360">
    <property type="entry name" value="US22-like"/>
</dbReference>
<dbReference type="Pfam" id="PF02393">
    <property type="entry name" value="US22"/>
    <property type="match status" value="1"/>
</dbReference>
<keyword id="KW-1185">Reference proteome</keyword>
<keyword id="KW-0732">Signal</keyword>
<gene>
    <name type="primary">U2</name>
</gene>
<proteinExistence type="inferred from homology"/>
<reference key="1">
    <citation type="journal article" date="1999" name="J. Virol.">
        <title>Human herpesvirus 6B genome sequence: coding content and comparison with human herpesvirus 6A.</title>
        <authorList>
            <person name="Dominguez G."/>
            <person name="Dambaugh T.R."/>
            <person name="Stamey F.R."/>
            <person name="Dewhurst S."/>
            <person name="Inoue N."/>
            <person name="Pellett P.E."/>
        </authorList>
    </citation>
    <scope>NUCLEOTIDE SEQUENCE [LARGE SCALE GENOMIC DNA]</scope>
</reference>
<protein>
    <recommendedName>
        <fullName>Protein U2</fullName>
    </recommendedName>
</protein>
<accession>Q9QJ57</accession>